<feature type="chain" id="PRO_0000308867" description="DNA-directed RNA polymerase subunit beta'">
    <location>
        <begin position="1"/>
        <end position="1507"/>
    </location>
</feature>
<feature type="binding site" evidence="1">
    <location>
        <position position="71"/>
    </location>
    <ligand>
        <name>Zn(2+)</name>
        <dbReference type="ChEBI" id="CHEBI:29105"/>
        <label>1</label>
    </ligand>
</feature>
<feature type="binding site" evidence="1">
    <location>
        <position position="73"/>
    </location>
    <ligand>
        <name>Zn(2+)</name>
        <dbReference type="ChEBI" id="CHEBI:29105"/>
        <label>1</label>
    </ligand>
</feature>
<feature type="binding site" evidence="1">
    <location>
        <position position="86"/>
    </location>
    <ligand>
        <name>Zn(2+)</name>
        <dbReference type="ChEBI" id="CHEBI:29105"/>
        <label>1</label>
    </ligand>
</feature>
<feature type="binding site" evidence="1">
    <location>
        <position position="89"/>
    </location>
    <ligand>
        <name>Zn(2+)</name>
        <dbReference type="ChEBI" id="CHEBI:29105"/>
        <label>1</label>
    </ligand>
</feature>
<feature type="binding site" evidence="1">
    <location>
        <position position="470"/>
    </location>
    <ligand>
        <name>Mg(2+)</name>
        <dbReference type="ChEBI" id="CHEBI:18420"/>
    </ligand>
</feature>
<feature type="binding site" evidence="1">
    <location>
        <position position="472"/>
    </location>
    <ligand>
        <name>Mg(2+)</name>
        <dbReference type="ChEBI" id="CHEBI:18420"/>
    </ligand>
</feature>
<feature type="binding site" evidence="1">
    <location>
        <position position="474"/>
    </location>
    <ligand>
        <name>Mg(2+)</name>
        <dbReference type="ChEBI" id="CHEBI:18420"/>
    </ligand>
</feature>
<feature type="binding site" evidence="1">
    <location>
        <position position="800"/>
    </location>
    <ligand>
        <name>Zn(2+)</name>
        <dbReference type="ChEBI" id="CHEBI:29105"/>
        <label>2</label>
    </ligand>
</feature>
<feature type="binding site" evidence="1">
    <location>
        <position position="874"/>
    </location>
    <ligand>
        <name>Zn(2+)</name>
        <dbReference type="ChEBI" id="CHEBI:29105"/>
        <label>2</label>
    </ligand>
</feature>
<feature type="binding site" evidence="1">
    <location>
        <position position="881"/>
    </location>
    <ligand>
        <name>Zn(2+)</name>
        <dbReference type="ChEBI" id="CHEBI:29105"/>
        <label>2</label>
    </ligand>
</feature>
<feature type="binding site" evidence="1">
    <location>
        <position position="884"/>
    </location>
    <ligand>
        <name>Zn(2+)</name>
        <dbReference type="ChEBI" id="CHEBI:29105"/>
        <label>2</label>
    </ligand>
</feature>
<comment type="function">
    <text evidence="1">DNA-dependent RNA polymerase catalyzes the transcription of DNA into RNA using the four ribonucleoside triphosphates as substrates.</text>
</comment>
<comment type="catalytic activity">
    <reaction evidence="1">
        <text>RNA(n) + a ribonucleoside 5'-triphosphate = RNA(n+1) + diphosphate</text>
        <dbReference type="Rhea" id="RHEA:21248"/>
        <dbReference type="Rhea" id="RHEA-COMP:14527"/>
        <dbReference type="Rhea" id="RHEA-COMP:17342"/>
        <dbReference type="ChEBI" id="CHEBI:33019"/>
        <dbReference type="ChEBI" id="CHEBI:61557"/>
        <dbReference type="ChEBI" id="CHEBI:140395"/>
        <dbReference type="EC" id="2.7.7.6"/>
    </reaction>
</comment>
<comment type="cofactor">
    <cofactor evidence="1">
        <name>Mg(2+)</name>
        <dbReference type="ChEBI" id="CHEBI:18420"/>
    </cofactor>
    <text evidence="1">Binds 1 Mg(2+) ion per subunit.</text>
</comment>
<comment type="cofactor">
    <cofactor evidence="1">
        <name>Zn(2+)</name>
        <dbReference type="ChEBI" id="CHEBI:29105"/>
    </cofactor>
    <text evidence="1">Binds 2 Zn(2+) ions per subunit.</text>
</comment>
<comment type="subunit">
    <text evidence="1">The RNAP catalytic core consists of 2 alpha, 1 beta, 1 beta' and 1 omega subunit. When a sigma factor is associated with the core the holoenzyme is formed, which can initiate transcription.</text>
</comment>
<comment type="similarity">
    <text evidence="1">Belongs to the RNA polymerase beta' chain family.</text>
</comment>
<organism>
    <name type="scientific">Nitratiruptor sp. (strain SB155-2)</name>
    <dbReference type="NCBI Taxonomy" id="387092"/>
    <lineage>
        <taxon>Bacteria</taxon>
        <taxon>Pseudomonadati</taxon>
        <taxon>Campylobacterota</taxon>
        <taxon>Epsilonproteobacteria</taxon>
        <taxon>Nautiliales</taxon>
        <taxon>Nitratiruptoraceae</taxon>
        <taxon>Nitratiruptor</taxon>
    </lineage>
</organism>
<reference key="1">
    <citation type="journal article" date="2007" name="Proc. Natl. Acad. Sci. U.S.A.">
        <title>Deep-sea vent epsilon-proteobacterial genomes provide insights into emergence of pathogens.</title>
        <authorList>
            <person name="Nakagawa S."/>
            <person name="Takaki Y."/>
            <person name="Shimamura S."/>
            <person name="Reysenbach A.-L."/>
            <person name="Takai K."/>
            <person name="Horikoshi K."/>
        </authorList>
    </citation>
    <scope>NUCLEOTIDE SEQUENCE [LARGE SCALE GENOMIC DNA]</scope>
    <source>
        <strain>SB155-2</strain>
    </source>
</reference>
<accession>A6Q1M4</accession>
<proteinExistence type="inferred from homology"/>
<protein>
    <recommendedName>
        <fullName evidence="1">DNA-directed RNA polymerase subunit beta'</fullName>
        <shortName evidence="1">RNAP subunit beta'</shortName>
        <ecNumber evidence="1">2.7.7.6</ecNumber>
    </recommendedName>
    <alternativeName>
        <fullName evidence="1">RNA polymerase subunit beta'</fullName>
    </alternativeName>
    <alternativeName>
        <fullName evidence="1">Transcriptase subunit beta'</fullName>
    </alternativeName>
</protein>
<dbReference type="EC" id="2.7.7.6" evidence="1"/>
<dbReference type="EMBL" id="AP009178">
    <property type="protein sequence ID" value="BAF69383.1"/>
    <property type="molecule type" value="Genomic_DNA"/>
</dbReference>
<dbReference type="RefSeq" id="WP_012081646.1">
    <property type="nucleotide sequence ID" value="NC_009662.1"/>
</dbReference>
<dbReference type="SMR" id="A6Q1M4"/>
<dbReference type="FunCoup" id="A6Q1M4">
    <property type="interactions" value="451"/>
</dbReference>
<dbReference type="STRING" id="387092.NIS_0269"/>
<dbReference type="KEGG" id="nis:NIS_0269"/>
<dbReference type="eggNOG" id="COG0086">
    <property type="taxonomic scope" value="Bacteria"/>
</dbReference>
<dbReference type="HOGENOM" id="CLU_000524_3_1_7"/>
<dbReference type="InParanoid" id="A6Q1M4"/>
<dbReference type="OrthoDB" id="9815296at2"/>
<dbReference type="Proteomes" id="UP000001118">
    <property type="component" value="Chromosome"/>
</dbReference>
<dbReference type="GO" id="GO:0000428">
    <property type="term" value="C:DNA-directed RNA polymerase complex"/>
    <property type="evidence" value="ECO:0007669"/>
    <property type="project" value="UniProtKB-KW"/>
</dbReference>
<dbReference type="GO" id="GO:0003677">
    <property type="term" value="F:DNA binding"/>
    <property type="evidence" value="ECO:0007669"/>
    <property type="project" value="UniProtKB-UniRule"/>
</dbReference>
<dbReference type="GO" id="GO:0003899">
    <property type="term" value="F:DNA-directed RNA polymerase activity"/>
    <property type="evidence" value="ECO:0007669"/>
    <property type="project" value="UniProtKB-UniRule"/>
</dbReference>
<dbReference type="GO" id="GO:0000287">
    <property type="term" value="F:magnesium ion binding"/>
    <property type="evidence" value="ECO:0007669"/>
    <property type="project" value="UniProtKB-UniRule"/>
</dbReference>
<dbReference type="GO" id="GO:0008270">
    <property type="term" value="F:zinc ion binding"/>
    <property type="evidence" value="ECO:0007669"/>
    <property type="project" value="UniProtKB-UniRule"/>
</dbReference>
<dbReference type="GO" id="GO:0006351">
    <property type="term" value="P:DNA-templated transcription"/>
    <property type="evidence" value="ECO:0007669"/>
    <property type="project" value="UniProtKB-UniRule"/>
</dbReference>
<dbReference type="CDD" id="cd02655">
    <property type="entry name" value="RNAP_beta'_C"/>
    <property type="match status" value="1"/>
</dbReference>
<dbReference type="CDD" id="cd01609">
    <property type="entry name" value="RNAP_beta'_N"/>
    <property type="match status" value="1"/>
</dbReference>
<dbReference type="FunFam" id="1.10.132.30:FF:000003">
    <property type="entry name" value="DNA-directed RNA polymerase subunit beta"/>
    <property type="match status" value="1"/>
</dbReference>
<dbReference type="Gene3D" id="1.10.132.30">
    <property type="match status" value="1"/>
</dbReference>
<dbReference type="Gene3D" id="1.10.150.390">
    <property type="match status" value="1"/>
</dbReference>
<dbReference type="Gene3D" id="1.10.1790.20">
    <property type="match status" value="1"/>
</dbReference>
<dbReference type="Gene3D" id="1.10.40.90">
    <property type="match status" value="1"/>
</dbReference>
<dbReference type="Gene3D" id="2.40.40.20">
    <property type="match status" value="1"/>
</dbReference>
<dbReference type="Gene3D" id="2.40.50.100">
    <property type="match status" value="3"/>
</dbReference>
<dbReference type="Gene3D" id="4.10.860.120">
    <property type="entry name" value="RNA polymerase II, clamp domain"/>
    <property type="match status" value="1"/>
</dbReference>
<dbReference type="Gene3D" id="1.10.274.100">
    <property type="entry name" value="RNA polymerase Rpb1, domain 3"/>
    <property type="match status" value="1"/>
</dbReference>
<dbReference type="HAMAP" id="MF_01322">
    <property type="entry name" value="RNApol_bact_RpoC"/>
    <property type="match status" value="1"/>
</dbReference>
<dbReference type="InterPro" id="IPR045867">
    <property type="entry name" value="DNA-dir_RpoC_beta_prime"/>
</dbReference>
<dbReference type="InterPro" id="IPR012754">
    <property type="entry name" value="DNA-dir_RpoC_beta_prime_bact"/>
</dbReference>
<dbReference type="InterPro" id="IPR000722">
    <property type="entry name" value="RNA_pol_asu"/>
</dbReference>
<dbReference type="InterPro" id="IPR006592">
    <property type="entry name" value="RNA_pol_N"/>
</dbReference>
<dbReference type="InterPro" id="IPR007080">
    <property type="entry name" value="RNA_pol_Rpb1_1"/>
</dbReference>
<dbReference type="InterPro" id="IPR007066">
    <property type="entry name" value="RNA_pol_Rpb1_3"/>
</dbReference>
<dbReference type="InterPro" id="IPR042102">
    <property type="entry name" value="RNA_pol_Rpb1_3_sf"/>
</dbReference>
<dbReference type="InterPro" id="IPR007083">
    <property type="entry name" value="RNA_pol_Rpb1_4"/>
</dbReference>
<dbReference type="InterPro" id="IPR007081">
    <property type="entry name" value="RNA_pol_Rpb1_5"/>
</dbReference>
<dbReference type="InterPro" id="IPR044893">
    <property type="entry name" value="RNA_pol_Rpb1_clamp_domain"/>
</dbReference>
<dbReference type="InterPro" id="IPR038120">
    <property type="entry name" value="Rpb1_funnel_sf"/>
</dbReference>
<dbReference type="NCBIfam" id="TIGR02386">
    <property type="entry name" value="rpoC_TIGR"/>
    <property type="match status" value="1"/>
</dbReference>
<dbReference type="PANTHER" id="PTHR19376">
    <property type="entry name" value="DNA-DIRECTED RNA POLYMERASE"/>
    <property type="match status" value="1"/>
</dbReference>
<dbReference type="PANTHER" id="PTHR19376:SF54">
    <property type="entry name" value="DNA-DIRECTED RNA POLYMERASE SUBUNIT BETA"/>
    <property type="match status" value="1"/>
</dbReference>
<dbReference type="Pfam" id="PF04997">
    <property type="entry name" value="RNA_pol_Rpb1_1"/>
    <property type="match status" value="1"/>
</dbReference>
<dbReference type="Pfam" id="PF00623">
    <property type="entry name" value="RNA_pol_Rpb1_2"/>
    <property type="match status" value="2"/>
</dbReference>
<dbReference type="Pfam" id="PF04983">
    <property type="entry name" value="RNA_pol_Rpb1_3"/>
    <property type="match status" value="1"/>
</dbReference>
<dbReference type="Pfam" id="PF05000">
    <property type="entry name" value="RNA_pol_Rpb1_4"/>
    <property type="match status" value="1"/>
</dbReference>
<dbReference type="Pfam" id="PF04998">
    <property type="entry name" value="RNA_pol_Rpb1_5"/>
    <property type="match status" value="1"/>
</dbReference>
<dbReference type="SMART" id="SM00663">
    <property type="entry name" value="RPOLA_N"/>
    <property type="match status" value="1"/>
</dbReference>
<dbReference type="SUPFAM" id="SSF64484">
    <property type="entry name" value="beta and beta-prime subunits of DNA dependent RNA-polymerase"/>
    <property type="match status" value="1"/>
</dbReference>
<name>RPOC_NITSB</name>
<keyword id="KW-0240">DNA-directed RNA polymerase</keyword>
<keyword id="KW-0460">Magnesium</keyword>
<keyword id="KW-0479">Metal-binding</keyword>
<keyword id="KW-0548">Nucleotidyltransferase</keyword>
<keyword id="KW-1185">Reference proteome</keyword>
<keyword id="KW-0804">Transcription</keyword>
<keyword id="KW-0808">Transferase</keyword>
<keyword id="KW-0862">Zinc</keyword>
<evidence type="ECO:0000255" key="1">
    <source>
        <dbReference type="HAMAP-Rule" id="MF_01322"/>
    </source>
</evidence>
<gene>
    <name evidence="1" type="primary">rpoC</name>
    <name type="ordered locus">NIS_0269</name>
</gene>
<sequence>MKKLVPIEIGEEKRPKDIKAIQFRLASPEKILSWSHGEVKKPETINYRTLKPERDGLFCAKIFGPIKDYECLCGKYKKMRYKGVVCEKCGVEVTTSKVRRSRMGHIELVTPVAHIWYVNSLPSRIGTLLGVKMKDLERVLYYEAYIVKNPGEAYYDFEKKNPVKKYDVLNEEQYQQLVQHFGDTGFDARMGGEVVKELLEEFDLVEAFEQLREEMKNTNSEAKRKTIVKRLKVIESFLNSGNRPEWMMLTVVPVLPPDLRPLVALDGGKFAVSDVNDLYRRVINRNQRLKRLLELDAPEIIVRNEKRMLQEAVDALIDNGRRGNAVKGANKRPLKSLSEIIKGKQGRFRQNLLGKRVDFSGRSVIVVGPNLRMDQCGLPKLMALELFKPHLLAKLEEKGYATTLKQAKKMIEDRENVVWECLQEIVDEYPVLLNRAPTLHKLSIQAFHPVLIDGKAIQLHPLVCSAFNADFDGDQMAVHVPLTEEAIAECKILMLSSMNILLPASGRAIAVPTQDMVLGIYYLSKEKEDAKGTHKLFADINEVMTALESDYLDLNAKIRTKIDNQVIYTTAGRLIIKSILPDFVPVNLWNKVLKKKDIANLVDYVFKEGGPKITAEFLDNLKELGFKYSTVTGISISAYDIKVPDSKKRLIEEAKRKVKEIQQQFQAGLLTEQERYNKIIDIWTDTSNEVAKEMMELMKNDKDGFNSVYMMADSGARGSSAQIRQLAGMRGLMAKPDGTIIETPIISNFKEGLNVLEYFISTHGARKGLADTALKTANAGYLTRKLVDVAQNVKITMDDCGTHEGVEITDISVGNELIEPLEDRIFGRVLAQDIMDPITNEILFSEGTLLDEEKTRKIIEAGIKSVTIRTPITCKAEKGVCAKCYGLNMAEGKLVKPGEAVGIIAAQSIGEPGTQLTLRTFHVGGTASRSAEERQVVATKEGFIRYYNLKTYETEDGKIIVANRRNAAVLLVEPKIKALFNGEIEVKPIHDEVLITLSNGEEKVRYSFKKSDFARPNELAGVSGKIEGKLYLPYESGTKVEAGESIVEIIKEGWNIPNRIPYAAILKVKDGAPVTQKIVSGAKGVVKYYKLKGDYLERFEGVKEGEKIEEKGLFAVIADEEGREAARHYIARGSIIEVADDQSVDKDTVIAMPAKSDKTVIAEWDPYSIPIIAEKEGVITFEDIIPGVTAVEQVDEFTGETRLTINEYIPAEYKPAIVLAPKDGSEIIRYVLDPKTAIYVQNGQEVKLAQTLAKTPKAAAKSKDITGGLPRVSELFEARRPKDPAVVAEIDGVVSFGKPSRGKQRIIITADTGQTVEYLIDKNRQILVHNGEFVHAGERLTDGTVSGHDILRTLGEKALMYYMVSEIQQVYRRQGVNISDKHIEIIVSQMLRQVKIVDSGDTKFIPGDLVSKKEFRKENEKILRLGGQPAIAEPILIGITRAAVSSDSVISAASFQDTTKVLTEASVSAKVDHLEDLKENVIIGRLIPVGTGLYKDRKVKVETASQE</sequence>